<name>PXPA2_BRADU</name>
<reference key="1">
    <citation type="journal article" date="2002" name="DNA Res.">
        <title>Complete genomic sequence of nitrogen-fixing symbiotic bacterium Bradyrhizobium japonicum USDA110.</title>
        <authorList>
            <person name="Kaneko T."/>
            <person name="Nakamura Y."/>
            <person name="Sato S."/>
            <person name="Minamisawa K."/>
            <person name="Uchiumi T."/>
            <person name="Sasamoto S."/>
            <person name="Watanabe A."/>
            <person name="Idesawa K."/>
            <person name="Iriguchi M."/>
            <person name="Kawashima K."/>
            <person name="Kohara M."/>
            <person name="Matsumoto M."/>
            <person name="Shimpo S."/>
            <person name="Tsuruoka H."/>
            <person name="Wada T."/>
            <person name="Yamada M."/>
            <person name="Tabata S."/>
        </authorList>
    </citation>
    <scope>NUCLEOTIDE SEQUENCE [LARGE SCALE GENOMIC DNA]</scope>
    <source>
        <strain>JCM 10833 / BCRC 13528 / IAM 13628 / NBRC 14792 / USDA 110</strain>
    </source>
</reference>
<dbReference type="EC" id="3.5.2.9" evidence="1"/>
<dbReference type="EMBL" id="BA000040">
    <property type="protein sequence ID" value="BAC49833.1"/>
    <property type="molecule type" value="Genomic_DNA"/>
</dbReference>
<dbReference type="RefSeq" id="NP_771208.1">
    <property type="nucleotide sequence ID" value="NC_004463.1"/>
</dbReference>
<dbReference type="RefSeq" id="WP_011087339.1">
    <property type="nucleotide sequence ID" value="NC_004463.1"/>
</dbReference>
<dbReference type="SMR" id="Q89LH6"/>
<dbReference type="FunCoup" id="Q89LH6">
    <property type="interactions" value="53"/>
</dbReference>
<dbReference type="STRING" id="224911.AAV28_20070"/>
<dbReference type="EnsemblBacteria" id="BAC49833">
    <property type="protein sequence ID" value="BAC49833"/>
    <property type="gene ID" value="BAC49833"/>
</dbReference>
<dbReference type="GeneID" id="46491580"/>
<dbReference type="KEGG" id="bja:blr4568"/>
<dbReference type="PATRIC" id="fig|224911.44.peg.4365"/>
<dbReference type="eggNOG" id="COG1540">
    <property type="taxonomic scope" value="Bacteria"/>
</dbReference>
<dbReference type="HOGENOM" id="CLU_069535_0_0_5"/>
<dbReference type="InParanoid" id="Q89LH6"/>
<dbReference type="OrthoDB" id="9773478at2"/>
<dbReference type="PhylomeDB" id="Q89LH6"/>
<dbReference type="Proteomes" id="UP000002526">
    <property type="component" value="Chromosome"/>
</dbReference>
<dbReference type="GO" id="GO:0017168">
    <property type="term" value="F:5-oxoprolinase (ATP-hydrolyzing) activity"/>
    <property type="evidence" value="ECO:0007669"/>
    <property type="project" value="UniProtKB-UniRule"/>
</dbReference>
<dbReference type="GO" id="GO:0005524">
    <property type="term" value="F:ATP binding"/>
    <property type="evidence" value="ECO:0007669"/>
    <property type="project" value="UniProtKB-UniRule"/>
</dbReference>
<dbReference type="GO" id="GO:0005975">
    <property type="term" value="P:carbohydrate metabolic process"/>
    <property type="evidence" value="ECO:0007669"/>
    <property type="project" value="InterPro"/>
</dbReference>
<dbReference type="CDD" id="cd10787">
    <property type="entry name" value="LamB_YcsF_like"/>
    <property type="match status" value="1"/>
</dbReference>
<dbReference type="Gene3D" id="3.20.20.370">
    <property type="entry name" value="Glycoside hydrolase/deacetylase"/>
    <property type="match status" value="1"/>
</dbReference>
<dbReference type="HAMAP" id="MF_00691">
    <property type="entry name" value="PxpA"/>
    <property type="match status" value="1"/>
</dbReference>
<dbReference type="InterPro" id="IPR011330">
    <property type="entry name" value="Glyco_hydro/deAcase_b/a-brl"/>
</dbReference>
<dbReference type="InterPro" id="IPR005501">
    <property type="entry name" value="LamB/YcsF/PxpA-like"/>
</dbReference>
<dbReference type="NCBIfam" id="NF003814">
    <property type="entry name" value="PRK05406.1-3"/>
    <property type="match status" value="1"/>
</dbReference>
<dbReference type="NCBIfam" id="NF003816">
    <property type="entry name" value="PRK05406.1-5"/>
    <property type="match status" value="1"/>
</dbReference>
<dbReference type="PANTHER" id="PTHR30292:SF0">
    <property type="entry name" value="5-OXOPROLINASE SUBUNIT A"/>
    <property type="match status" value="1"/>
</dbReference>
<dbReference type="PANTHER" id="PTHR30292">
    <property type="entry name" value="UNCHARACTERIZED PROTEIN YBGL-RELATED"/>
    <property type="match status" value="1"/>
</dbReference>
<dbReference type="Pfam" id="PF03746">
    <property type="entry name" value="LamB_YcsF"/>
    <property type="match status" value="1"/>
</dbReference>
<dbReference type="SUPFAM" id="SSF88713">
    <property type="entry name" value="Glycoside hydrolase/deacetylase"/>
    <property type="match status" value="1"/>
</dbReference>
<sequence>MKTIDLNCDLGEGFGAWEMGNDAAMIELASSVNVACGFHAGDPDIMRRTVELAKARGVSVGAHPGYRDLHGFGRHPIAGLKASEIENLVAYQIGALQAIATAAGHKVTHVKAHGALSNVACEDDMTAKAIAAGIKAVDPSLIFVVLANSKLVKAGEAANLPMVHEVFADRAYEDDGNLVSRKKPGAVLHDAKAIADRVVRMVQDGAVVSVTGKVIKMRTDTVCIHGDTHGAVEIARTLRQALKDAGIEVAPFKRGA</sequence>
<comment type="function">
    <text evidence="1">Catalyzes the cleavage of 5-oxoproline to form L-glutamate coupled to the hydrolysis of ATP to ADP and inorganic phosphate.</text>
</comment>
<comment type="catalytic activity">
    <reaction evidence="1">
        <text>5-oxo-L-proline + ATP + 2 H2O = L-glutamate + ADP + phosphate + H(+)</text>
        <dbReference type="Rhea" id="RHEA:10348"/>
        <dbReference type="ChEBI" id="CHEBI:15377"/>
        <dbReference type="ChEBI" id="CHEBI:15378"/>
        <dbReference type="ChEBI" id="CHEBI:29985"/>
        <dbReference type="ChEBI" id="CHEBI:30616"/>
        <dbReference type="ChEBI" id="CHEBI:43474"/>
        <dbReference type="ChEBI" id="CHEBI:58402"/>
        <dbReference type="ChEBI" id="CHEBI:456216"/>
        <dbReference type="EC" id="3.5.2.9"/>
    </reaction>
</comment>
<comment type="subunit">
    <text evidence="1">Forms a complex composed of PxpA, PxpB and PxpC.</text>
</comment>
<comment type="similarity">
    <text evidence="1">Belongs to the LamB/PxpA family.</text>
</comment>
<evidence type="ECO:0000255" key="1">
    <source>
        <dbReference type="HAMAP-Rule" id="MF_00691"/>
    </source>
</evidence>
<proteinExistence type="inferred from homology"/>
<feature type="chain" id="PRO_0000184996" description="5-oxoprolinase subunit A 2">
    <location>
        <begin position="1"/>
        <end position="256"/>
    </location>
</feature>
<gene>
    <name evidence="1" type="primary">pxpA2</name>
    <name type="ordered locus">blr4568</name>
</gene>
<accession>Q89LH6</accession>
<protein>
    <recommendedName>
        <fullName evidence="1">5-oxoprolinase subunit A 2</fullName>
        <shortName evidence="1">5-OPase subunit A 2</shortName>
        <ecNumber evidence="1">3.5.2.9</ecNumber>
    </recommendedName>
    <alternativeName>
        <fullName evidence="1">5-oxoprolinase (ATP-hydrolyzing) subunit A 2</fullName>
    </alternativeName>
</protein>
<keyword id="KW-0067">ATP-binding</keyword>
<keyword id="KW-0378">Hydrolase</keyword>
<keyword id="KW-0547">Nucleotide-binding</keyword>
<keyword id="KW-1185">Reference proteome</keyword>
<organism>
    <name type="scientific">Bradyrhizobium diazoefficiens (strain JCM 10833 / BCRC 13528 / IAM 13628 / NBRC 14792 / USDA 110)</name>
    <dbReference type="NCBI Taxonomy" id="224911"/>
    <lineage>
        <taxon>Bacteria</taxon>
        <taxon>Pseudomonadati</taxon>
        <taxon>Pseudomonadota</taxon>
        <taxon>Alphaproteobacteria</taxon>
        <taxon>Hyphomicrobiales</taxon>
        <taxon>Nitrobacteraceae</taxon>
        <taxon>Bradyrhizobium</taxon>
    </lineage>
</organism>